<reference key="1">
    <citation type="journal article" date="2002" name="Lancet">
        <title>Genome and virulence determinants of high virulence community-acquired MRSA.</title>
        <authorList>
            <person name="Baba T."/>
            <person name="Takeuchi F."/>
            <person name="Kuroda M."/>
            <person name="Yuzawa H."/>
            <person name="Aoki K."/>
            <person name="Oguchi A."/>
            <person name="Nagai Y."/>
            <person name="Iwama N."/>
            <person name="Asano K."/>
            <person name="Naimi T."/>
            <person name="Kuroda H."/>
            <person name="Cui L."/>
            <person name="Yamamoto K."/>
            <person name="Hiramatsu K."/>
        </authorList>
    </citation>
    <scope>NUCLEOTIDE SEQUENCE [LARGE SCALE GENOMIC DNA]</scope>
    <source>
        <strain>MW2</strain>
    </source>
</reference>
<protein>
    <recommendedName>
        <fullName evidence="1">DNA polymerase IV</fullName>
        <shortName evidence="1">Pol IV</shortName>
        <ecNumber evidence="1">2.7.7.7</ecNumber>
    </recommendedName>
</protein>
<dbReference type="EC" id="2.7.7.7" evidence="1"/>
<dbReference type="EMBL" id="BA000033">
    <property type="protein sequence ID" value="BAB95701.1"/>
    <property type="molecule type" value="Genomic_DNA"/>
</dbReference>
<dbReference type="RefSeq" id="WP_000140176.1">
    <property type="nucleotide sequence ID" value="NC_003923.1"/>
</dbReference>
<dbReference type="SMR" id="P58964"/>
<dbReference type="KEGG" id="sam:MW1836"/>
<dbReference type="HOGENOM" id="CLU_012348_1_2_9"/>
<dbReference type="GO" id="GO:0005829">
    <property type="term" value="C:cytosol"/>
    <property type="evidence" value="ECO:0007669"/>
    <property type="project" value="TreeGrafter"/>
</dbReference>
<dbReference type="GO" id="GO:0003684">
    <property type="term" value="F:damaged DNA binding"/>
    <property type="evidence" value="ECO:0007669"/>
    <property type="project" value="InterPro"/>
</dbReference>
<dbReference type="GO" id="GO:0003887">
    <property type="term" value="F:DNA-directed DNA polymerase activity"/>
    <property type="evidence" value="ECO:0007669"/>
    <property type="project" value="UniProtKB-UniRule"/>
</dbReference>
<dbReference type="GO" id="GO:0000287">
    <property type="term" value="F:magnesium ion binding"/>
    <property type="evidence" value="ECO:0007669"/>
    <property type="project" value="UniProtKB-UniRule"/>
</dbReference>
<dbReference type="GO" id="GO:0006261">
    <property type="term" value="P:DNA-templated DNA replication"/>
    <property type="evidence" value="ECO:0007669"/>
    <property type="project" value="UniProtKB-UniRule"/>
</dbReference>
<dbReference type="GO" id="GO:0042276">
    <property type="term" value="P:error-prone translesion synthesis"/>
    <property type="evidence" value="ECO:0007669"/>
    <property type="project" value="TreeGrafter"/>
</dbReference>
<dbReference type="GO" id="GO:0009432">
    <property type="term" value="P:SOS response"/>
    <property type="evidence" value="ECO:0007669"/>
    <property type="project" value="TreeGrafter"/>
</dbReference>
<dbReference type="CDD" id="cd03586">
    <property type="entry name" value="PolY_Pol_IV_kappa"/>
    <property type="match status" value="1"/>
</dbReference>
<dbReference type="FunFam" id="3.30.1490.100:FF:000004">
    <property type="entry name" value="DNA polymerase IV"/>
    <property type="match status" value="1"/>
</dbReference>
<dbReference type="FunFam" id="3.40.1170.60:FF:000001">
    <property type="entry name" value="DNA polymerase IV"/>
    <property type="match status" value="1"/>
</dbReference>
<dbReference type="Gene3D" id="3.30.70.270">
    <property type="match status" value="1"/>
</dbReference>
<dbReference type="Gene3D" id="3.40.1170.60">
    <property type="match status" value="1"/>
</dbReference>
<dbReference type="Gene3D" id="1.10.150.20">
    <property type="entry name" value="5' to 3' exonuclease, C-terminal subdomain"/>
    <property type="match status" value="1"/>
</dbReference>
<dbReference type="Gene3D" id="3.30.1490.100">
    <property type="entry name" value="DNA polymerase, Y-family, little finger domain"/>
    <property type="match status" value="1"/>
</dbReference>
<dbReference type="HAMAP" id="MF_01113">
    <property type="entry name" value="DNApol_IV"/>
    <property type="match status" value="1"/>
</dbReference>
<dbReference type="InterPro" id="IPR043502">
    <property type="entry name" value="DNA/RNA_pol_sf"/>
</dbReference>
<dbReference type="InterPro" id="IPR036775">
    <property type="entry name" value="DNA_pol_Y-fam_lit_finger_sf"/>
</dbReference>
<dbReference type="InterPro" id="IPR017961">
    <property type="entry name" value="DNA_pol_Y-fam_little_finger"/>
</dbReference>
<dbReference type="InterPro" id="IPR050116">
    <property type="entry name" value="DNA_polymerase-Y"/>
</dbReference>
<dbReference type="InterPro" id="IPR022880">
    <property type="entry name" value="DNApol_IV"/>
</dbReference>
<dbReference type="InterPro" id="IPR043128">
    <property type="entry name" value="Rev_trsase/Diguanyl_cyclase"/>
</dbReference>
<dbReference type="InterPro" id="IPR001126">
    <property type="entry name" value="UmuC"/>
</dbReference>
<dbReference type="NCBIfam" id="NF002677">
    <property type="entry name" value="PRK02406.1"/>
    <property type="match status" value="1"/>
</dbReference>
<dbReference type="NCBIfam" id="NF010731">
    <property type="entry name" value="PRK14133.1"/>
    <property type="match status" value="1"/>
</dbReference>
<dbReference type="PANTHER" id="PTHR11076:SF33">
    <property type="entry name" value="DNA POLYMERASE KAPPA"/>
    <property type="match status" value="1"/>
</dbReference>
<dbReference type="PANTHER" id="PTHR11076">
    <property type="entry name" value="DNA REPAIR POLYMERASE UMUC / TRANSFERASE FAMILY MEMBER"/>
    <property type="match status" value="1"/>
</dbReference>
<dbReference type="Pfam" id="PF00817">
    <property type="entry name" value="IMS"/>
    <property type="match status" value="1"/>
</dbReference>
<dbReference type="Pfam" id="PF11799">
    <property type="entry name" value="IMS_C"/>
    <property type="match status" value="1"/>
</dbReference>
<dbReference type="SUPFAM" id="SSF56672">
    <property type="entry name" value="DNA/RNA polymerases"/>
    <property type="match status" value="1"/>
</dbReference>
<dbReference type="SUPFAM" id="SSF100879">
    <property type="entry name" value="Lesion bypass DNA polymerase (Y-family), little finger domain"/>
    <property type="match status" value="1"/>
</dbReference>
<dbReference type="PROSITE" id="PS50173">
    <property type="entry name" value="UMUC"/>
    <property type="match status" value="1"/>
</dbReference>
<name>DPO4_STAAW</name>
<feature type="chain" id="PRO_0000173948" description="DNA polymerase IV">
    <location>
        <begin position="1"/>
        <end position="356"/>
    </location>
</feature>
<feature type="domain" description="UmuC" evidence="1">
    <location>
        <begin position="6"/>
        <end position="187"/>
    </location>
</feature>
<feature type="active site" evidence="1">
    <location>
        <position position="106"/>
    </location>
</feature>
<feature type="binding site" evidence="1">
    <location>
        <position position="10"/>
    </location>
    <ligand>
        <name>Mg(2+)</name>
        <dbReference type="ChEBI" id="CHEBI:18420"/>
    </ligand>
</feature>
<feature type="binding site" evidence="1">
    <location>
        <position position="105"/>
    </location>
    <ligand>
        <name>Mg(2+)</name>
        <dbReference type="ChEBI" id="CHEBI:18420"/>
    </ligand>
</feature>
<feature type="site" description="Substrate discrimination" evidence="1">
    <location>
        <position position="15"/>
    </location>
</feature>
<accession>P58964</accession>
<keyword id="KW-0963">Cytoplasm</keyword>
<keyword id="KW-0227">DNA damage</keyword>
<keyword id="KW-0234">DNA repair</keyword>
<keyword id="KW-0235">DNA replication</keyword>
<keyword id="KW-0238">DNA-binding</keyword>
<keyword id="KW-0239">DNA-directed DNA polymerase</keyword>
<keyword id="KW-0460">Magnesium</keyword>
<keyword id="KW-0479">Metal-binding</keyword>
<keyword id="KW-0515">Mutator protein</keyword>
<keyword id="KW-0548">Nucleotidyltransferase</keyword>
<keyword id="KW-0808">Transferase</keyword>
<sequence length="356" mass="40315">MTERRIIHIDMDYFFAQVEMRDNPKLKGKPVIVGGKASSRGVVSTASYEARKYGVHSAMPMSQAHKLCPNGYFVTSNFGAYRETSAQIMSIFRSYTDKVEPMSLDEAYLDITELVRPDLPASKIAQYIRKDILEQTHLTASAGVSYNKFLAKLASGMNKPDGMTVIDYQNVHDILMTLDIGDFPGVGKASKKVMHDNGIFNGRDLYEKTEFELIRLFGKRGRGLYNKARGIDHSEVKSSRVRKSVGTERTFATDVNDDEEILRKVWELSGKTAERLNKLQKSAKTVTVKIKTYQFETLSKQMSLRDSVSSEEDIYNIAYLLYNDLKDPDVPIRLIGVTVGNLEQSTYKNMTIYDFI</sequence>
<gene>
    <name evidence="1" type="primary">dinB</name>
    <name type="ordered locus">MW1836</name>
</gene>
<proteinExistence type="inferred from homology"/>
<comment type="function">
    <text evidence="1">Poorly processive, error-prone DNA polymerase involved in untargeted mutagenesis. Copies undamaged DNA at stalled replication forks, which arise in vivo from mismatched or misaligned primer ends. These misaligned primers can be extended by PolIV. Exhibits no 3'-5' exonuclease (proofreading) activity. May be involved in translesional synthesis, in conjunction with the beta clamp from PolIII.</text>
</comment>
<comment type="catalytic activity">
    <reaction evidence="1">
        <text>DNA(n) + a 2'-deoxyribonucleoside 5'-triphosphate = DNA(n+1) + diphosphate</text>
        <dbReference type="Rhea" id="RHEA:22508"/>
        <dbReference type="Rhea" id="RHEA-COMP:17339"/>
        <dbReference type="Rhea" id="RHEA-COMP:17340"/>
        <dbReference type="ChEBI" id="CHEBI:33019"/>
        <dbReference type="ChEBI" id="CHEBI:61560"/>
        <dbReference type="ChEBI" id="CHEBI:173112"/>
        <dbReference type="EC" id="2.7.7.7"/>
    </reaction>
</comment>
<comment type="cofactor">
    <cofactor evidence="1">
        <name>Mg(2+)</name>
        <dbReference type="ChEBI" id="CHEBI:18420"/>
    </cofactor>
    <text evidence="1">Binds 2 magnesium ions per subunit.</text>
</comment>
<comment type="subunit">
    <text evidence="1">Monomer.</text>
</comment>
<comment type="subcellular location">
    <subcellularLocation>
        <location evidence="1">Cytoplasm</location>
    </subcellularLocation>
</comment>
<comment type="similarity">
    <text evidence="1">Belongs to the DNA polymerase type-Y family.</text>
</comment>
<evidence type="ECO:0000255" key="1">
    <source>
        <dbReference type="HAMAP-Rule" id="MF_01113"/>
    </source>
</evidence>
<organism>
    <name type="scientific">Staphylococcus aureus (strain MW2)</name>
    <dbReference type="NCBI Taxonomy" id="196620"/>
    <lineage>
        <taxon>Bacteria</taxon>
        <taxon>Bacillati</taxon>
        <taxon>Bacillota</taxon>
        <taxon>Bacilli</taxon>
        <taxon>Bacillales</taxon>
        <taxon>Staphylococcaceae</taxon>
        <taxon>Staphylococcus</taxon>
    </lineage>
</organism>